<proteinExistence type="evidence at protein level"/>
<evidence type="ECO:0000250" key="1">
    <source>
        <dbReference type="UniProtKB" id="Q921J2"/>
    </source>
</evidence>
<evidence type="ECO:0000269" key="2">
    <source>
    </source>
</evidence>
<evidence type="ECO:0000269" key="3">
    <source>
    </source>
</evidence>
<evidence type="ECO:0000269" key="4">
    <source>
    </source>
</evidence>
<evidence type="ECO:0000269" key="5">
    <source>
    </source>
</evidence>
<evidence type="ECO:0000269" key="6">
    <source>
    </source>
</evidence>
<evidence type="ECO:0000269" key="7">
    <source>
    </source>
</evidence>
<evidence type="ECO:0000269" key="8">
    <source>
    </source>
</evidence>
<evidence type="ECO:0000269" key="9">
    <source>
    </source>
</evidence>
<evidence type="ECO:0000269" key="10">
    <source>
    </source>
</evidence>
<evidence type="ECO:0000269" key="11">
    <source>
    </source>
</evidence>
<evidence type="ECO:0000269" key="12">
    <source>
    </source>
</evidence>
<evidence type="ECO:0000269" key="13">
    <source>
    </source>
</evidence>
<evidence type="ECO:0000269" key="14">
    <source>
    </source>
</evidence>
<evidence type="ECO:0000269" key="15">
    <source>
    </source>
</evidence>
<evidence type="ECO:0000269" key="16">
    <source>
    </source>
</evidence>
<evidence type="ECO:0000269" key="17">
    <source>
    </source>
</evidence>
<evidence type="ECO:0000269" key="18">
    <source>
    </source>
</evidence>
<evidence type="ECO:0000269" key="19">
    <source>
    </source>
</evidence>
<evidence type="ECO:0000269" key="20">
    <source>
    </source>
</evidence>
<evidence type="ECO:0000269" key="21">
    <source>
    </source>
</evidence>
<evidence type="ECO:0000269" key="22">
    <source>
    </source>
</evidence>
<evidence type="ECO:0000269" key="23">
    <source>
    </source>
</evidence>
<evidence type="ECO:0000269" key="24">
    <source>
    </source>
</evidence>
<evidence type="ECO:0000303" key="25">
    <source>
    </source>
</evidence>
<evidence type="ECO:0000305" key="26"/>
<evidence type="ECO:0000305" key="27">
    <source>
    </source>
</evidence>
<evidence type="ECO:0000312" key="28">
    <source>
        <dbReference type="HGNC" id="HGNC:10011"/>
    </source>
</evidence>
<evidence type="ECO:0007744" key="29">
    <source>
        <dbReference type="PDB" id="1XTQ"/>
    </source>
</evidence>
<evidence type="ECO:0007744" key="30">
    <source>
        <dbReference type="PDB" id="1XTS"/>
    </source>
</evidence>
<evidence type="ECO:0007744" key="31">
    <source>
        <dbReference type="PDB" id="3SEA"/>
    </source>
</evidence>
<evidence type="ECO:0007744" key="32">
    <source>
        <dbReference type="PDB" id="3T5G"/>
    </source>
</evidence>
<evidence type="ECO:0007744" key="33">
    <source>
        <dbReference type="PDB" id="5YXH"/>
    </source>
</evidence>
<evidence type="ECO:0007744" key="34">
    <source>
        <dbReference type="PDB" id="6BCU"/>
    </source>
</evidence>
<evidence type="ECO:0007744" key="35">
    <source>
        <dbReference type="PDB" id="6BSX"/>
    </source>
</evidence>
<evidence type="ECO:0007744" key="36">
    <source>
        <dbReference type="PDB" id="6BT0"/>
    </source>
</evidence>
<evidence type="ECO:0007744" key="37">
    <source>
        <dbReference type="PDB" id="7BTA"/>
    </source>
</evidence>
<evidence type="ECO:0007744" key="38">
    <source>
        <dbReference type="PDB" id="7BTC"/>
    </source>
</evidence>
<evidence type="ECO:0007744" key="39">
    <source>
        <dbReference type="PDB" id="7BTD"/>
    </source>
</evidence>
<evidence type="ECO:0007829" key="40">
    <source>
        <dbReference type="PDB" id="6BSX"/>
    </source>
</evidence>
<evidence type="ECO:0007829" key="41">
    <source>
        <dbReference type="PDB" id="7BTA"/>
    </source>
</evidence>
<reference key="1">
    <citation type="journal article" date="1995" name="FEBS Lett.">
        <title>A novel approach for expression cloning of small GTPases: identification, tissue distribution and chromosome mapping of the human homolog of rheb.</title>
        <authorList>
            <person name="Gromov P.S."/>
            <person name="Madsen P."/>
            <person name="Tomerup N."/>
            <person name="Celis J.E."/>
        </authorList>
    </citation>
    <scope>NUCLEOTIDE SEQUENCE [MRNA]</scope>
    <scope>TISSUE SPECIFICITY</scope>
    <source>
        <tissue>Psoriatic skin</tissue>
    </source>
</reference>
<reference key="2">
    <citation type="journal article" date="1996" name="Genomics">
        <title>Isolation of cDNA and genomic clones of a human Ras-related GTP-binding protein gene and its chromosomal localization to the long arm of chromosome 7, 7q36.</title>
        <authorList>
            <person name="Mizuki N."/>
            <person name="Kimura M."/>
            <person name="Ohno S."/>
            <person name="Miyata S."/>
            <person name="Sato M."/>
            <person name="Ando H."/>
            <person name="Ishihara M."/>
            <person name="Goto K."/>
            <person name="Watanabe S."/>
            <person name="Yamazaki M."/>
            <person name="Ono A."/>
            <person name="Taguchi S."/>
            <person name="Okumura K."/>
            <person name="Nogami M."/>
            <person name="Taguchi H."/>
            <person name="Ando A."/>
            <person name="Inoko H."/>
        </authorList>
    </citation>
    <scope>NUCLEOTIDE SEQUENCE [MRNA]</scope>
    <source>
        <tissue>Skin</tissue>
    </source>
</reference>
<reference key="3">
    <citation type="submission" date="1999-05" db="EMBL/GenBank/DDBJ databases">
        <title>Detection of membrane-associated proteins using serum of mice immunized with membrane fractions of breast carcinoma cells.</title>
        <authorList>
            <person name="Weidenmueller U."/>
            <person name="Tur M.K."/>
            <person name="Tawadros S."/>
            <person name="Engert A."/>
            <person name="Barth S."/>
        </authorList>
    </citation>
    <scope>NUCLEOTIDE SEQUENCE [MRNA]</scope>
    <source>
        <tissue>Mammary carcinoma</tissue>
    </source>
</reference>
<reference key="4">
    <citation type="submission" date="2002-03" db="EMBL/GenBank/DDBJ databases">
        <title>cDNA clones of human proteins involved in signal transduction sequenced by the Guthrie cDNA resource center (www.cdna.org).</title>
        <authorList>
            <person name="Puhl H.L. III"/>
            <person name="Ikeda S.R."/>
            <person name="Aronstam R.S."/>
        </authorList>
    </citation>
    <scope>NUCLEOTIDE SEQUENCE [LARGE SCALE MRNA]</scope>
    <source>
        <tissue>Brain</tissue>
    </source>
</reference>
<reference key="5">
    <citation type="journal article" date="2004" name="Nat. Genet.">
        <title>Complete sequencing and characterization of 21,243 full-length human cDNAs.</title>
        <authorList>
            <person name="Ota T."/>
            <person name="Suzuki Y."/>
            <person name="Nishikawa T."/>
            <person name="Otsuki T."/>
            <person name="Sugiyama T."/>
            <person name="Irie R."/>
            <person name="Wakamatsu A."/>
            <person name="Hayashi K."/>
            <person name="Sato H."/>
            <person name="Nagai K."/>
            <person name="Kimura K."/>
            <person name="Makita H."/>
            <person name="Sekine M."/>
            <person name="Obayashi M."/>
            <person name="Nishi T."/>
            <person name="Shibahara T."/>
            <person name="Tanaka T."/>
            <person name="Ishii S."/>
            <person name="Yamamoto J."/>
            <person name="Saito K."/>
            <person name="Kawai Y."/>
            <person name="Isono Y."/>
            <person name="Nakamura Y."/>
            <person name="Nagahari K."/>
            <person name="Murakami K."/>
            <person name="Yasuda T."/>
            <person name="Iwayanagi T."/>
            <person name="Wagatsuma M."/>
            <person name="Shiratori A."/>
            <person name="Sudo H."/>
            <person name="Hosoiri T."/>
            <person name="Kaku Y."/>
            <person name="Kodaira H."/>
            <person name="Kondo H."/>
            <person name="Sugawara M."/>
            <person name="Takahashi M."/>
            <person name="Kanda K."/>
            <person name="Yokoi T."/>
            <person name="Furuya T."/>
            <person name="Kikkawa E."/>
            <person name="Omura Y."/>
            <person name="Abe K."/>
            <person name="Kamihara K."/>
            <person name="Katsuta N."/>
            <person name="Sato K."/>
            <person name="Tanikawa M."/>
            <person name="Yamazaki M."/>
            <person name="Ninomiya K."/>
            <person name="Ishibashi T."/>
            <person name="Yamashita H."/>
            <person name="Murakawa K."/>
            <person name="Fujimori K."/>
            <person name="Tanai H."/>
            <person name="Kimata M."/>
            <person name="Watanabe M."/>
            <person name="Hiraoka S."/>
            <person name="Chiba Y."/>
            <person name="Ishida S."/>
            <person name="Ono Y."/>
            <person name="Takiguchi S."/>
            <person name="Watanabe S."/>
            <person name="Yosida M."/>
            <person name="Hotuta T."/>
            <person name="Kusano J."/>
            <person name="Kanehori K."/>
            <person name="Takahashi-Fujii A."/>
            <person name="Hara H."/>
            <person name="Tanase T.-O."/>
            <person name="Nomura Y."/>
            <person name="Togiya S."/>
            <person name="Komai F."/>
            <person name="Hara R."/>
            <person name="Takeuchi K."/>
            <person name="Arita M."/>
            <person name="Imose N."/>
            <person name="Musashino K."/>
            <person name="Yuuki H."/>
            <person name="Oshima A."/>
            <person name="Sasaki N."/>
            <person name="Aotsuka S."/>
            <person name="Yoshikawa Y."/>
            <person name="Matsunawa H."/>
            <person name="Ichihara T."/>
            <person name="Shiohata N."/>
            <person name="Sano S."/>
            <person name="Moriya S."/>
            <person name="Momiyama H."/>
            <person name="Satoh N."/>
            <person name="Takami S."/>
            <person name="Terashima Y."/>
            <person name="Suzuki O."/>
            <person name="Nakagawa S."/>
            <person name="Senoh A."/>
            <person name="Mizoguchi H."/>
            <person name="Goto Y."/>
            <person name="Shimizu F."/>
            <person name="Wakebe H."/>
            <person name="Hishigaki H."/>
            <person name="Watanabe T."/>
            <person name="Sugiyama A."/>
            <person name="Takemoto M."/>
            <person name="Kawakami B."/>
            <person name="Yamazaki M."/>
            <person name="Watanabe K."/>
            <person name="Kumagai A."/>
            <person name="Itakura S."/>
            <person name="Fukuzumi Y."/>
            <person name="Fujimori Y."/>
            <person name="Komiyama M."/>
            <person name="Tashiro H."/>
            <person name="Tanigami A."/>
            <person name="Fujiwara T."/>
            <person name="Ono T."/>
            <person name="Yamada K."/>
            <person name="Fujii Y."/>
            <person name="Ozaki K."/>
            <person name="Hirao M."/>
            <person name="Ohmori Y."/>
            <person name="Kawabata A."/>
            <person name="Hikiji T."/>
            <person name="Kobatake N."/>
            <person name="Inagaki H."/>
            <person name="Ikema Y."/>
            <person name="Okamoto S."/>
            <person name="Okitani R."/>
            <person name="Kawakami T."/>
            <person name="Noguchi S."/>
            <person name="Itoh T."/>
            <person name="Shigeta K."/>
            <person name="Senba T."/>
            <person name="Matsumura K."/>
            <person name="Nakajima Y."/>
            <person name="Mizuno T."/>
            <person name="Morinaga M."/>
            <person name="Sasaki M."/>
            <person name="Togashi T."/>
            <person name="Oyama M."/>
            <person name="Hata H."/>
            <person name="Watanabe M."/>
            <person name="Komatsu T."/>
            <person name="Mizushima-Sugano J."/>
            <person name="Satoh T."/>
            <person name="Shirai Y."/>
            <person name="Takahashi Y."/>
            <person name="Nakagawa K."/>
            <person name="Okumura K."/>
            <person name="Nagase T."/>
            <person name="Nomura N."/>
            <person name="Kikuchi H."/>
            <person name="Masuho Y."/>
            <person name="Yamashita R."/>
            <person name="Nakai K."/>
            <person name="Yada T."/>
            <person name="Nakamura Y."/>
            <person name="Ohara O."/>
            <person name="Isogai T."/>
            <person name="Sugano S."/>
        </authorList>
    </citation>
    <scope>NUCLEOTIDE SEQUENCE [LARGE SCALE MRNA]</scope>
    <source>
        <tissue>Brain</tissue>
    </source>
</reference>
<reference key="6">
    <citation type="submission" date="2003-05" db="EMBL/GenBank/DDBJ databases">
        <title>Cloning of human full-length CDSs in BD Creator(TM) system donor vector.</title>
        <authorList>
            <person name="Kalnine N."/>
            <person name="Chen X."/>
            <person name="Rolfs A."/>
            <person name="Halleck A."/>
            <person name="Hines L."/>
            <person name="Eisenstein S."/>
            <person name="Koundinya M."/>
            <person name="Raphael J."/>
            <person name="Moreira D."/>
            <person name="Kelley T."/>
            <person name="LaBaer J."/>
            <person name="Lin Y."/>
            <person name="Phelan M."/>
            <person name="Farmer A."/>
        </authorList>
    </citation>
    <scope>NUCLEOTIDE SEQUENCE [LARGE SCALE MRNA]</scope>
</reference>
<reference key="7">
    <citation type="journal article" date="2003" name="Nature">
        <title>The DNA sequence of human chromosome 7.</title>
        <authorList>
            <person name="Hillier L.W."/>
            <person name="Fulton R.S."/>
            <person name="Fulton L.A."/>
            <person name="Graves T.A."/>
            <person name="Pepin K.H."/>
            <person name="Wagner-McPherson C."/>
            <person name="Layman D."/>
            <person name="Maas J."/>
            <person name="Jaeger S."/>
            <person name="Walker R."/>
            <person name="Wylie K."/>
            <person name="Sekhon M."/>
            <person name="Becker M.C."/>
            <person name="O'Laughlin M.D."/>
            <person name="Schaller M.E."/>
            <person name="Fewell G.A."/>
            <person name="Delehaunty K.D."/>
            <person name="Miner T.L."/>
            <person name="Nash W.E."/>
            <person name="Cordes M."/>
            <person name="Du H."/>
            <person name="Sun H."/>
            <person name="Edwards J."/>
            <person name="Bradshaw-Cordum H."/>
            <person name="Ali J."/>
            <person name="Andrews S."/>
            <person name="Isak A."/>
            <person name="Vanbrunt A."/>
            <person name="Nguyen C."/>
            <person name="Du F."/>
            <person name="Lamar B."/>
            <person name="Courtney L."/>
            <person name="Kalicki J."/>
            <person name="Ozersky P."/>
            <person name="Bielicki L."/>
            <person name="Scott K."/>
            <person name="Holmes A."/>
            <person name="Harkins R."/>
            <person name="Harris A."/>
            <person name="Strong C.M."/>
            <person name="Hou S."/>
            <person name="Tomlinson C."/>
            <person name="Dauphin-Kohlberg S."/>
            <person name="Kozlowicz-Reilly A."/>
            <person name="Leonard S."/>
            <person name="Rohlfing T."/>
            <person name="Rock S.M."/>
            <person name="Tin-Wollam A.-M."/>
            <person name="Abbott A."/>
            <person name="Minx P."/>
            <person name="Maupin R."/>
            <person name="Strowmatt C."/>
            <person name="Latreille P."/>
            <person name="Miller N."/>
            <person name="Johnson D."/>
            <person name="Murray J."/>
            <person name="Woessner J.P."/>
            <person name="Wendl M.C."/>
            <person name="Yang S.-P."/>
            <person name="Schultz B.R."/>
            <person name="Wallis J.W."/>
            <person name="Spieth J."/>
            <person name="Bieri T.A."/>
            <person name="Nelson J.O."/>
            <person name="Berkowicz N."/>
            <person name="Wohldmann P.E."/>
            <person name="Cook L.L."/>
            <person name="Hickenbotham M.T."/>
            <person name="Eldred J."/>
            <person name="Williams D."/>
            <person name="Bedell J.A."/>
            <person name="Mardis E.R."/>
            <person name="Clifton S.W."/>
            <person name="Chissoe S.L."/>
            <person name="Marra M.A."/>
            <person name="Raymond C."/>
            <person name="Haugen E."/>
            <person name="Gillett W."/>
            <person name="Zhou Y."/>
            <person name="James R."/>
            <person name="Phelps K."/>
            <person name="Iadanoto S."/>
            <person name="Bubb K."/>
            <person name="Simms E."/>
            <person name="Levy R."/>
            <person name="Clendenning J."/>
            <person name="Kaul R."/>
            <person name="Kent W.J."/>
            <person name="Furey T.S."/>
            <person name="Baertsch R.A."/>
            <person name="Brent M.R."/>
            <person name="Keibler E."/>
            <person name="Flicek P."/>
            <person name="Bork P."/>
            <person name="Suyama M."/>
            <person name="Bailey J.A."/>
            <person name="Portnoy M.E."/>
            <person name="Torrents D."/>
            <person name="Chinwalla A.T."/>
            <person name="Gish W.R."/>
            <person name="Eddy S.R."/>
            <person name="McPherson J.D."/>
            <person name="Olson M.V."/>
            <person name="Eichler E.E."/>
            <person name="Green E.D."/>
            <person name="Waterston R.H."/>
            <person name="Wilson R.K."/>
        </authorList>
    </citation>
    <scope>NUCLEOTIDE SEQUENCE [LARGE SCALE GENOMIC DNA]</scope>
</reference>
<reference key="8">
    <citation type="submission" date="2005-09" db="EMBL/GenBank/DDBJ databases">
        <authorList>
            <person name="Mural R.J."/>
            <person name="Istrail S."/>
            <person name="Sutton G.G."/>
            <person name="Florea L."/>
            <person name="Halpern A.L."/>
            <person name="Mobarry C.M."/>
            <person name="Lippert R."/>
            <person name="Walenz B."/>
            <person name="Shatkay H."/>
            <person name="Dew I."/>
            <person name="Miller J.R."/>
            <person name="Flanigan M.J."/>
            <person name="Edwards N.J."/>
            <person name="Bolanos R."/>
            <person name="Fasulo D."/>
            <person name="Halldorsson B.V."/>
            <person name="Hannenhalli S."/>
            <person name="Turner R."/>
            <person name="Yooseph S."/>
            <person name="Lu F."/>
            <person name="Nusskern D.R."/>
            <person name="Shue B.C."/>
            <person name="Zheng X.H."/>
            <person name="Zhong F."/>
            <person name="Delcher A.L."/>
            <person name="Huson D.H."/>
            <person name="Kravitz S.A."/>
            <person name="Mouchard L."/>
            <person name="Reinert K."/>
            <person name="Remington K.A."/>
            <person name="Clark A.G."/>
            <person name="Waterman M.S."/>
            <person name="Eichler E.E."/>
            <person name="Adams M.D."/>
            <person name="Hunkapiller M.W."/>
            <person name="Myers E.W."/>
            <person name="Venter J.C."/>
        </authorList>
    </citation>
    <scope>NUCLEOTIDE SEQUENCE [LARGE SCALE GENOMIC DNA]</scope>
</reference>
<reference key="9">
    <citation type="journal article" date="2004" name="Genome Res.">
        <title>The status, quality, and expansion of the NIH full-length cDNA project: the Mammalian Gene Collection (MGC).</title>
        <authorList>
            <consortium name="The MGC Project Team"/>
        </authorList>
    </citation>
    <scope>NUCLEOTIDE SEQUENCE [LARGE SCALE MRNA]</scope>
    <source>
        <tissue>Muscle</tissue>
        <tissue>Testis</tissue>
    </source>
</reference>
<reference key="10">
    <citation type="journal article" date="2002" name="Nat. Cell Biol.">
        <title>TSC2 is phosphorylated and inhibited by Akt and suppresses mTOR signalling.</title>
        <authorList>
            <person name="Inoki K."/>
            <person name="Li Y."/>
            <person name="Zhu T."/>
            <person name="Wu J."/>
            <person name="Guan K.L."/>
        </authorList>
    </citation>
    <scope>FUNCTION</scope>
</reference>
<reference key="11">
    <citation type="journal article" date="2003" name="Curr. Biol.">
        <title>Tuberous sclerosis complex gene products, Tuberin and Hamartin, control mTOR signaling by acting as a GTPase-activating protein complex toward Rheb.</title>
        <authorList>
            <person name="Tee A.R."/>
            <person name="Manning B.D."/>
            <person name="Roux P.P."/>
            <person name="Cantley L.C."/>
            <person name="Blenis J."/>
        </authorList>
    </citation>
    <scope>FUNCTION</scope>
    <scope>ACTIVITY REGULATION</scope>
    <scope>ISOPRENYLATION AT CYS-181</scope>
    <scope>MUTAGENESIS OF CYS-181</scope>
</reference>
<reference key="12">
    <citation type="journal article" date="2002" name="Proc. Natl. Acad. Sci. U.S.A.">
        <title>Tuberous sclerosis complex-1 and -2 gene products function together to inhibit mammalian target of rapamycin (mTOR)-mediated downstream signaling.</title>
        <authorList>
            <person name="Tee A.R."/>
            <person name="Fingar D.C."/>
            <person name="Manning B.D."/>
            <person name="Kwiatkowski D.J."/>
            <person name="Cantley L.C."/>
            <person name="Blenis J."/>
        </authorList>
    </citation>
    <scope>FUNCTION</scope>
    <scope>ACTIVITY REGULATION</scope>
</reference>
<reference key="13">
    <citation type="journal article" date="2003" name="J. Biol. Chem.">
        <title>Rheb binds tuberous sclerosis complex 2 (TSC2) and promotes S6 kinase activation in a rapamycin- and farnesylation-dependent manner.</title>
        <authorList>
            <person name="Castro A.F."/>
            <person name="Rebhun J.F."/>
            <person name="Clark G.J."/>
            <person name="Quilliam L.A."/>
        </authorList>
    </citation>
    <scope>FUNCTION</scope>
    <scope>ACTIVITY REGULATION</scope>
    <scope>ISOPRENYLATION</scope>
    <scope>MUTAGENESIS OF GLN-64</scope>
</reference>
<reference key="14">
    <citation type="journal article" date="2003" name="Genes Dev.">
        <title>Rheb GTPase is a direct target of TSC2 GAP activity and regulates mTOR signaling.</title>
        <authorList>
            <person name="Inoki K."/>
            <person name="Li Y."/>
            <person name="Xu T."/>
            <person name="Guan K.-L."/>
        </authorList>
    </citation>
    <scope>FUNCTION</scope>
    <scope>ACTIVITY REGULATION</scope>
</reference>
<reference key="15">
    <citation type="journal article" date="2004" name="Mol. Cell. Biol.">
        <title>Biochemical and functional characterizations of small GTPase Rheb and TSC2 GAP activity.</title>
        <authorList>
            <person name="Li Y."/>
            <person name="Inoki K."/>
            <person name="Guan K.-L."/>
        </authorList>
    </citation>
    <scope>FUNCTION</scope>
    <scope>CATALYTIC ACTIVITY</scope>
    <scope>ACTIVITY REGULATION</scope>
    <scope>MUTAGENESIS OF ARG-15; SER-20; ASP-60; GLN-64 AND CYS-181</scope>
</reference>
<reference key="16">
    <citation type="journal article" date="2004" name="Proc. Natl. Acad. Sci. U.S.A.">
        <title>A tagging-via-substrate technology for detection and proteomics of farnesylated proteins.</title>
        <authorList>
            <person name="Kho Y."/>
            <person name="Kim S.C."/>
            <person name="Jiang C."/>
            <person name="Barma D."/>
            <person name="Kwon S.W."/>
            <person name="Cheng J."/>
            <person name="Jaunbergs J."/>
            <person name="Weinbaum C."/>
            <person name="Tamanoi F."/>
            <person name="Falck J."/>
            <person name="Zhao Y."/>
        </authorList>
    </citation>
    <scope>ISOPRENYLATION AT CYS-181</scope>
</reference>
<reference key="17">
    <citation type="journal article" date="2005" name="Curr. Biol.">
        <title>Rheb binds and regulates the mTOR kinase.</title>
        <authorList>
            <person name="Long X."/>
            <person name="Lin Y."/>
            <person name="Ortiz-Vega S."/>
            <person name="Yonezawa K."/>
            <person name="Avruch J."/>
        </authorList>
    </citation>
    <scope>FUNCTION</scope>
    <scope>INTERACTION WITH MTOR; MLST8; RPTOR AND TSC2</scope>
    <scope>MUTAGENESIS OF SER-20; THR-38; ILE-39 AND ASN-41</scope>
</reference>
<reference key="18">
    <citation type="journal article" date="2005" name="FEBS Lett.">
        <title>Analysis of mTOR signaling by the small G-proteins, Rheb and RhebL1.</title>
        <authorList>
            <person name="Tee A.R."/>
            <person name="Blenis J."/>
            <person name="Proud C.G."/>
        </authorList>
    </citation>
    <scope>FUNCTION</scope>
    <scope>MUTAGENESIS OF THR-38; GLU-40; ASN-41; PHE-43; LEU-46; THR-48; VAL-49; GLU-53; TYR-54 AND LEU-56</scope>
    <scope>INTERACTION WITH MTOR</scope>
</reference>
<reference key="19">
    <citation type="journal article" date="2010" name="Cell">
        <title>Ragulator-Rag complex targets mTORC1 to the lysosomal surface and is necessary for its activation by amino acids.</title>
        <authorList>
            <person name="Sancak Y."/>
            <person name="Bar-Peled L."/>
            <person name="Zoncu R."/>
            <person name="Markhard A.L."/>
            <person name="Nada S."/>
            <person name="Sabatini D.M."/>
        </authorList>
    </citation>
    <scope>FUNCTION</scope>
</reference>
<reference key="20">
    <citation type="journal article" date="2011" name="BMC Syst. Biol.">
        <title>Initial characterization of the human central proteome.</title>
        <authorList>
            <person name="Burkard T.R."/>
            <person name="Planyavsky M."/>
            <person name="Kaupe I."/>
            <person name="Breitwieser F.P."/>
            <person name="Buerckstuemmer T."/>
            <person name="Bennett K.L."/>
            <person name="Superti-Furga G."/>
            <person name="Colinge J."/>
        </authorList>
    </citation>
    <scope>IDENTIFICATION BY MASS SPECTROMETRY [LARGE SCALE ANALYSIS]</scope>
</reference>
<reference key="21">
    <citation type="journal article" date="2014" name="Cell">
        <title>Spatial control of the TSC complex integrates insulin and nutrient regulation of mTORC1 at the lysosome.</title>
        <authorList>
            <person name="Menon S."/>
            <person name="Dibble C.C."/>
            <person name="Talbott G."/>
            <person name="Hoxhaj G."/>
            <person name="Valvezan A.J."/>
            <person name="Takahashi H."/>
            <person name="Cantley L.C."/>
            <person name="Manning B.D."/>
        </authorList>
    </citation>
    <scope>FUNCTION</scope>
    <scope>ACTIVITY REGULATION</scope>
    <scope>SUBCELLULAR LOCATION</scope>
</reference>
<reference key="22">
    <citation type="journal article" date="2015" name="Dev. Cell">
        <title>MCRS1 binds and couples Rheb to amino acid-dependent mTORC1 activation.</title>
        <authorList>
            <person name="Fawal M.A."/>
            <person name="Brandt M."/>
            <person name="Djouder N."/>
        </authorList>
    </citation>
    <scope>FUNCTION</scope>
    <scope>INTERACTION WITH MCRS1 AND TSC2</scope>
    <scope>SUBCELLULAR LOCATION</scope>
    <scope>MUTAGENESIS OF SER-20; ILE-39; ASP-60; GLN-64 AND CYS-181</scope>
</reference>
<reference key="23">
    <citation type="journal article" date="2019" name="Cell Res.">
        <title>Ubiquitination of Rheb governs growth factor-induced mTORC1 activation.</title>
        <authorList>
            <person name="Deng L."/>
            <person name="Chen L."/>
            <person name="Zhao L."/>
            <person name="Xu Y."/>
            <person name="Peng X."/>
            <person name="Wang X."/>
            <person name="Ding L."/>
            <person name="Jin J."/>
            <person name="Teng H."/>
            <person name="Wang Y."/>
            <person name="Pan W."/>
            <person name="Yu F."/>
            <person name="Liao L."/>
            <person name="Li L."/>
            <person name="Ge X."/>
            <person name="Wang P."/>
        </authorList>
    </citation>
    <scope>UBIQUITINATION AT LYS-8</scope>
    <scope>DEUBIQUITINATION</scope>
    <scope>MUTAGENESIS OF LYS-8</scope>
</reference>
<reference key="24">
    <citation type="journal article" date="2020" name="Mol. Cell">
        <title>Amino acids enhance polyubiquitination of Rheb and its binding to mTORC1 by blocking lysosomal ATXN3 deubiquitinase activity.</title>
        <authorList>
            <person name="Yao Y."/>
            <person name="Hong S."/>
            <person name="Ikeda T."/>
            <person name="Mori H."/>
            <person name="MacDougald O.A."/>
            <person name="Nada S."/>
            <person name="Okada M."/>
            <person name="Inoki K."/>
        </authorList>
    </citation>
    <scope>FUNCTION</scope>
    <scope>SUBCELLULAR LOCATION</scope>
    <scope>UBIQUITINATION</scope>
    <scope>DEUBIQUITINATION BY ATXN3</scope>
    <scope>MUTAGENESIS OF LYS-8; LYS-109; LYS-135; LYS-151 AND LYS-178</scope>
</reference>
<reference key="25">
    <citation type="journal article" date="2005" name="J. Biol. Chem.">
        <title>Structural basis for the unique biological function of small GTPase RHEB.</title>
        <authorList>
            <person name="Yu Y."/>
            <person name="Li S."/>
            <person name="Xu X."/>
            <person name="Li Y."/>
            <person name="Guan K."/>
            <person name="Arnold E."/>
            <person name="Ding J."/>
        </authorList>
    </citation>
    <scope>X-RAY CRYSTALLOGRAPHY (2.0 ANGSTROMS) OF 1-169 IN COMPLEX WITH MAGNESIUM; GDP AND GTP</scope>
</reference>
<reference evidence="32" key="26">
    <citation type="journal article" date="2011" name="Nat. Chem. Biol.">
        <title>Arl2-GTP and Arl3-GTP regulate a GDI-like transport system for farnesylated cargo.</title>
        <authorList>
            <person name="Ismail S.A."/>
            <person name="Chen Y.X."/>
            <person name="Rusinova A."/>
            <person name="Chandra A."/>
            <person name="Bierbaum M."/>
            <person name="Gremer L."/>
            <person name="Triola G."/>
            <person name="Waldmann H."/>
            <person name="Bastiaens P.I."/>
            <person name="Wittinghofer A."/>
        </authorList>
    </citation>
    <scope>X-RAY CRYSTALLOGRAPHY (1.70 ANGSTROMS) OF 1-181 IN COMPLEX WITH GDP AND PDE6D</scope>
    <scope>ISOPRENYLATION AT CYS-181</scope>
    <scope>METHYLATION AT CYS-181</scope>
    <scope>INTERACTION WITH PDE6D</scope>
    <scope>SUBCELLULAR LOCATION</scope>
</reference>
<reference evidence="31" key="27">
    <citation type="journal article" date="2012" name="Structure">
        <title>An autoinhibited noncanonical mechanism of GTP hydrolysis by Rheb maintains mTORC1 homeostasis.</title>
        <authorList>
            <person name="Mazhab-Jafari M.T."/>
            <person name="Marshall C.B."/>
            <person name="Ishiyama N."/>
            <person name="Ho J."/>
            <person name="Di Palma V."/>
            <person name="Stambolic V."/>
            <person name="Ikura M."/>
        </authorList>
    </citation>
    <scope>X-RAY CRYSTALLOGRAPHY (2.00 ANGSTROMS) OF 3-169 IN COMPLEX WITH GDP</scope>
    <scope>FUNCTION</scope>
    <scope>CATALYTIC ACTIVITY</scope>
    <scope>ACTIVITY REGULATION</scope>
    <scope>INTERACTION WITH TSC2</scope>
    <scope>MUTAGENESIS OF TYR-35; ASP-60 AND ASP-65</scope>
</reference>
<reference evidence="34" key="28">
    <citation type="journal article" date="2017" name="Nature">
        <title>Mechanisms of mTORC1 activation by RHEB and inhibition by PRAS40.</title>
        <authorList>
            <person name="Yang H."/>
            <person name="Jiang X."/>
            <person name="Li B."/>
            <person name="Yang H.J."/>
            <person name="Miller M."/>
            <person name="Yang A."/>
            <person name="Dhar A."/>
            <person name="Pavletich N.P."/>
        </authorList>
    </citation>
    <scope>STRUCTURE BY ELECTRON MICROSCOPY (3.43 ANGSTROMS) IN COMPLEX WITH MAGNESIUM; GTP; MLST8; MTOR; RPTOR AND EIF4EBP1</scope>
    <scope>FUNCTION</scope>
</reference>
<reference evidence="33 35 36" key="29">
    <citation type="journal article" date="2018" name="Nat. Commun.">
        <title>A small molecule inhibitor of Rheb selectively targets mTORC1 signaling.</title>
        <authorList>
            <person name="Mahoney S.J."/>
            <person name="Narayan S."/>
            <person name="Molz L."/>
            <person name="Berstler L.A."/>
            <person name="Kang S.A."/>
            <person name="Vlasuk G.P."/>
            <person name="Saiah E."/>
        </authorList>
    </citation>
    <scope>X-RAY CRYSTALLOGRAPHY (1.65 ANGSTROMS) OF 1-169 IN COMPLEX WITH GDP AND MAGNESIUM</scope>
    <scope>FUNCTION</scope>
    <scope>ACTIVITY REGULATION</scope>
</reference>
<reference evidence="37 38 39" key="30">
    <citation type="journal article" date="2020" name="J. Mol. Cell Biol.">
        <title>Molecular basis for the functions of dominantly active Y35N and inactive D60K Rheb mutants in mTORC1 signaling.</title>
        <authorList>
            <person name="Zhang C."/>
            <person name="Liu Y."/>
            <person name="Zhang Y."/>
            <person name="Wang X."/>
            <person name="Zhang T."/>
            <person name="Ding J."/>
        </authorList>
    </citation>
    <scope>X-RAY CRYSTALLOGRAPHY (2.00 ANGSTROMS) OF 1-169 IN COMPLEX WITH GDP AND GTP ANALOG</scope>
    <scope>FUNCTION</scope>
    <scope>MUTAGENESIS OF TYR-35 AND ASP-60</scope>
</reference>
<reference key="31">
    <citation type="journal article" date="2006" name="Science">
        <title>The consensus coding sequences of human breast and colorectal cancers.</title>
        <authorList>
            <person name="Sjoeblom T."/>
            <person name="Jones S."/>
            <person name="Wood L.D."/>
            <person name="Parsons D.W."/>
            <person name="Lin J."/>
            <person name="Barber T.D."/>
            <person name="Mandelker D."/>
            <person name="Leary R.J."/>
            <person name="Ptak J."/>
            <person name="Silliman N."/>
            <person name="Szabo S."/>
            <person name="Buckhaults P."/>
            <person name="Farrell C."/>
            <person name="Meeh P."/>
            <person name="Markowitz S.D."/>
            <person name="Willis J."/>
            <person name="Dawson D."/>
            <person name="Willson J.K.V."/>
            <person name="Gazdar A.F."/>
            <person name="Hartigan J."/>
            <person name="Wu L."/>
            <person name="Liu C."/>
            <person name="Parmigiani G."/>
            <person name="Park B.H."/>
            <person name="Bachman K.E."/>
            <person name="Papadopoulos N."/>
            <person name="Vogelstein B."/>
            <person name="Kinzler K.W."/>
            <person name="Velculescu V.E."/>
        </authorList>
    </citation>
    <scope>VARIANT [LARGE SCALE ANALYSIS] LYS-139</scope>
</reference>
<accession>Q15382</accession>
<accession>B3KWN6</accession>
<accession>D3DX13</accession>
<accession>Q53Y56</accession>
<accession>Q99444</accession>
<keyword id="KW-0002">3D-structure</keyword>
<keyword id="KW-0963">Cytoplasm</keyword>
<keyword id="KW-0256">Endoplasmic reticulum</keyword>
<keyword id="KW-0333">Golgi apparatus</keyword>
<keyword id="KW-0342">GTP-binding</keyword>
<keyword id="KW-0378">Hydrolase</keyword>
<keyword id="KW-1017">Isopeptide bond</keyword>
<keyword id="KW-0449">Lipoprotein</keyword>
<keyword id="KW-0458">Lysosome</keyword>
<keyword id="KW-0460">Magnesium</keyword>
<keyword id="KW-0472">Membrane</keyword>
<keyword id="KW-0479">Metal-binding</keyword>
<keyword id="KW-0488">Methylation</keyword>
<keyword id="KW-0547">Nucleotide-binding</keyword>
<keyword id="KW-0597">Phosphoprotein</keyword>
<keyword id="KW-0636">Prenylation</keyword>
<keyword id="KW-1267">Proteomics identification</keyword>
<keyword id="KW-1185">Reference proteome</keyword>
<keyword id="KW-0832">Ubl conjugation</keyword>
<dbReference type="EC" id="3.6.5.-" evidence="8 16"/>
<dbReference type="EMBL" id="Z29677">
    <property type="protein sequence ID" value="CAA82774.1"/>
    <property type="molecule type" value="mRNA"/>
</dbReference>
<dbReference type="EMBL" id="D78132">
    <property type="protein sequence ID" value="BAA11211.1"/>
    <property type="molecule type" value="mRNA"/>
</dbReference>
<dbReference type="EMBL" id="AF148645">
    <property type="protein sequence ID" value="AAF73125.1"/>
    <property type="molecule type" value="mRNA"/>
</dbReference>
<dbReference type="EMBL" id="AF493921">
    <property type="protein sequence ID" value="AAM12635.1"/>
    <property type="molecule type" value="mRNA"/>
</dbReference>
<dbReference type="EMBL" id="AK125446">
    <property type="protein sequence ID" value="BAG54198.1"/>
    <property type="molecule type" value="mRNA"/>
</dbReference>
<dbReference type="EMBL" id="BT006958">
    <property type="protein sequence ID" value="AAP35604.1"/>
    <property type="molecule type" value="mRNA"/>
</dbReference>
<dbReference type="EMBL" id="AC005996">
    <property type="protein sequence ID" value="AAD15548.1"/>
    <property type="molecule type" value="Genomic_DNA"/>
</dbReference>
<dbReference type="EMBL" id="CH471173">
    <property type="protein sequence ID" value="EAW53989.1"/>
    <property type="molecule type" value="Genomic_DNA"/>
</dbReference>
<dbReference type="EMBL" id="BC016155">
    <property type="protein sequence ID" value="AAH16155.1"/>
    <property type="molecule type" value="mRNA"/>
</dbReference>
<dbReference type="EMBL" id="BC107705">
    <property type="protein sequence ID" value="AAI07706.1"/>
    <property type="molecule type" value="mRNA"/>
</dbReference>
<dbReference type="CCDS" id="CCDS5927.1"/>
<dbReference type="PIR" id="S68419">
    <property type="entry name" value="S41960"/>
</dbReference>
<dbReference type="RefSeq" id="NP_005605.1">
    <property type="nucleotide sequence ID" value="NM_005614.4"/>
</dbReference>
<dbReference type="PDB" id="1XTQ">
    <property type="method" value="X-ray"/>
    <property type="resolution" value="2.00 A"/>
    <property type="chains" value="A=1-169"/>
</dbReference>
<dbReference type="PDB" id="1XTR">
    <property type="method" value="X-ray"/>
    <property type="resolution" value="2.65 A"/>
    <property type="chains" value="A=1-169"/>
</dbReference>
<dbReference type="PDB" id="1XTS">
    <property type="method" value="X-ray"/>
    <property type="resolution" value="2.80 A"/>
    <property type="chains" value="A=1-169"/>
</dbReference>
<dbReference type="PDB" id="3SEA">
    <property type="method" value="X-ray"/>
    <property type="resolution" value="2.00 A"/>
    <property type="chains" value="A/B=3-169"/>
</dbReference>
<dbReference type="PDB" id="3T5G">
    <property type="method" value="X-ray"/>
    <property type="resolution" value="1.70 A"/>
    <property type="chains" value="A=1-181"/>
</dbReference>
<dbReference type="PDB" id="5YXH">
    <property type="method" value="X-ray"/>
    <property type="resolution" value="2.04 A"/>
    <property type="chains" value="A/B/C/D=2-169"/>
</dbReference>
<dbReference type="PDB" id="6BCU">
    <property type="method" value="EM"/>
    <property type="resolution" value="3.43 A"/>
    <property type="chains" value="R/S=1-184"/>
</dbReference>
<dbReference type="PDB" id="6BSX">
    <property type="method" value="X-ray"/>
    <property type="resolution" value="1.65 A"/>
    <property type="chains" value="A/B/C/D=1-169"/>
</dbReference>
<dbReference type="PDB" id="6BT0">
    <property type="method" value="X-ray"/>
    <property type="resolution" value="2.60 A"/>
    <property type="chains" value="A/B/C/D=1-169"/>
</dbReference>
<dbReference type="PDB" id="7BTA">
    <property type="method" value="X-ray"/>
    <property type="resolution" value="2.60 A"/>
    <property type="chains" value="A/B=1-169"/>
</dbReference>
<dbReference type="PDB" id="7BTC">
    <property type="method" value="X-ray"/>
    <property type="resolution" value="2.10 A"/>
    <property type="chains" value="A/B/C/D=1-169"/>
</dbReference>
<dbReference type="PDB" id="7BTD">
    <property type="method" value="X-ray"/>
    <property type="resolution" value="2.00 A"/>
    <property type="chains" value="A=1-169"/>
</dbReference>
<dbReference type="PDBsum" id="1XTQ"/>
<dbReference type="PDBsum" id="1XTR"/>
<dbReference type="PDBsum" id="1XTS"/>
<dbReference type="PDBsum" id="3SEA"/>
<dbReference type="PDBsum" id="3T5G"/>
<dbReference type="PDBsum" id="5YXH"/>
<dbReference type="PDBsum" id="6BCU"/>
<dbReference type="PDBsum" id="6BSX"/>
<dbReference type="PDBsum" id="6BT0"/>
<dbReference type="PDBsum" id="7BTA"/>
<dbReference type="PDBsum" id="7BTC"/>
<dbReference type="PDBsum" id="7BTD"/>
<dbReference type="BMRB" id="Q15382"/>
<dbReference type="EMDB" id="EMD-7086"/>
<dbReference type="SMR" id="Q15382"/>
<dbReference type="BioGRID" id="111941">
    <property type="interactions" value="110"/>
</dbReference>
<dbReference type="DIP" id="DIP-42816N"/>
<dbReference type="FunCoup" id="Q15382">
    <property type="interactions" value="2427"/>
</dbReference>
<dbReference type="IntAct" id="Q15382">
    <property type="interactions" value="63"/>
</dbReference>
<dbReference type="MINT" id="Q15382"/>
<dbReference type="STRING" id="9606.ENSP00000262187"/>
<dbReference type="BindingDB" id="Q15382"/>
<dbReference type="ChEMBL" id="CHEMBL3108656"/>
<dbReference type="DrugBank" id="DB04315">
    <property type="generic name" value="Guanosine-5'-Diphosphate"/>
</dbReference>
<dbReference type="DrugBank" id="DB04137">
    <property type="generic name" value="Guanosine-5'-Triphosphate"/>
</dbReference>
<dbReference type="GlyGen" id="Q15382">
    <property type="glycosylation" value="2 sites, 1 N-linked glycan (1 site), 1 O-linked glycan (1 site)"/>
</dbReference>
<dbReference type="iPTMnet" id="Q15382"/>
<dbReference type="MetOSite" id="Q15382"/>
<dbReference type="PhosphoSitePlus" id="Q15382"/>
<dbReference type="SwissPalm" id="Q15382"/>
<dbReference type="BioMuta" id="RHEB"/>
<dbReference type="DMDM" id="6919957"/>
<dbReference type="jPOST" id="Q15382"/>
<dbReference type="MassIVE" id="Q15382"/>
<dbReference type="PaxDb" id="9606-ENSP00000262187"/>
<dbReference type="PeptideAtlas" id="Q15382"/>
<dbReference type="ProteomicsDB" id="60554"/>
<dbReference type="Pumba" id="Q15382"/>
<dbReference type="TopDownProteomics" id="Q15382"/>
<dbReference type="Antibodypedia" id="18765">
    <property type="antibodies" value="481 antibodies from 40 providers"/>
</dbReference>
<dbReference type="DNASU" id="6009"/>
<dbReference type="Ensembl" id="ENST00000262187.10">
    <property type="protein sequence ID" value="ENSP00000262187.5"/>
    <property type="gene ID" value="ENSG00000106615.10"/>
</dbReference>
<dbReference type="GeneID" id="6009"/>
<dbReference type="KEGG" id="hsa:6009"/>
<dbReference type="MANE-Select" id="ENST00000262187.10">
    <property type="protein sequence ID" value="ENSP00000262187.5"/>
    <property type="RefSeq nucleotide sequence ID" value="NM_005614.4"/>
    <property type="RefSeq protein sequence ID" value="NP_005605.1"/>
</dbReference>
<dbReference type="UCSC" id="uc003wkh.1">
    <property type="organism name" value="human"/>
</dbReference>
<dbReference type="AGR" id="HGNC:10011"/>
<dbReference type="CTD" id="6009"/>
<dbReference type="DisGeNET" id="6009"/>
<dbReference type="GeneCards" id="RHEB"/>
<dbReference type="HGNC" id="HGNC:10011">
    <property type="gene designation" value="RHEB"/>
</dbReference>
<dbReference type="HPA" id="ENSG00000106615">
    <property type="expression patterns" value="Low tissue specificity"/>
</dbReference>
<dbReference type="MalaCards" id="RHEB"/>
<dbReference type="MIM" id="601293">
    <property type="type" value="gene"/>
</dbReference>
<dbReference type="neXtProt" id="NX_Q15382"/>
<dbReference type="OpenTargets" id="ENSG00000106615"/>
<dbReference type="PharmGKB" id="PA34389"/>
<dbReference type="VEuPathDB" id="HostDB:ENSG00000106615"/>
<dbReference type="eggNOG" id="KOG0395">
    <property type="taxonomic scope" value="Eukaryota"/>
</dbReference>
<dbReference type="GeneTree" id="ENSGT00940000159945"/>
<dbReference type="HOGENOM" id="CLU_041217_9_8_1"/>
<dbReference type="InParanoid" id="Q15382"/>
<dbReference type="OMA" id="SARHNEN"/>
<dbReference type="OrthoDB" id="25818at2759"/>
<dbReference type="PAN-GO" id="Q15382">
    <property type="GO annotations" value="5 GO annotations based on evolutionary models"/>
</dbReference>
<dbReference type="PhylomeDB" id="Q15382"/>
<dbReference type="TreeFam" id="TF314986"/>
<dbReference type="BRENDA" id="3.6.5.2">
    <property type="organism ID" value="2681"/>
</dbReference>
<dbReference type="PathwayCommons" id="Q15382"/>
<dbReference type="Reactome" id="R-HSA-1632852">
    <property type="pathway name" value="Macroautophagy"/>
</dbReference>
<dbReference type="Reactome" id="R-HSA-165159">
    <property type="pathway name" value="MTOR signalling"/>
</dbReference>
<dbReference type="Reactome" id="R-HSA-166208">
    <property type="pathway name" value="mTORC1-mediated signalling"/>
</dbReference>
<dbReference type="Reactome" id="R-HSA-380972">
    <property type="pathway name" value="Energy dependent regulation of mTOR by LKB1-AMPK"/>
</dbReference>
<dbReference type="Reactome" id="R-HSA-5628897">
    <property type="pathway name" value="TP53 Regulates Metabolic Genes"/>
</dbReference>
<dbReference type="Reactome" id="R-HSA-8943724">
    <property type="pathway name" value="Regulation of PTEN gene transcription"/>
</dbReference>
<dbReference type="Reactome" id="R-HSA-9639288">
    <property type="pathway name" value="Amino acids regulate mTORC1"/>
</dbReference>
<dbReference type="SABIO-RK" id="Q15382"/>
<dbReference type="SignaLink" id="Q15382"/>
<dbReference type="SIGNOR" id="Q15382"/>
<dbReference type="BioGRID-ORCS" id="6009">
    <property type="hits" value="537 hits in 1131 CRISPR screens"/>
</dbReference>
<dbReference type="ChiTaRS" id="RHEB">
    <property type="organism name" value="human"/>
</dbReference>
<dbReference type="EvolutionaryTrace" id="Q15382"/>
<dbReference type="GeneWiki" id="RHEB"/>
<dbReference type="GenomeRNAi" id="6009"/>
<dbReference type="Pharos" id="Q15382">
    <property type="development level" value="Tbio"/>
</dbReference>
<dbReference type="PRO" id="PR:Q15382"/>
<dbReference type="Proteomes" id="UP000005640">
    <property type="component" value="Chromosome 7"/>
</dbReference>
<dbReference type="RNAct" id="Q15382">
    <property type="molecule type" value="protein"/>
</dbReference>
<dbReference type="Bgee" id="ENSG00000106615">
    <property type="expression patterns" value="Expressed in ventricular zone and 143 other cell types or tissues"/>
</dbReference>
<dbReference type="ExpressionAtlas" id="Q15382">
    <property type="expression patterns" value="baseline and differential"/>
</dbReference>
<dbReference type="GO" id="GO:0005829">
    <property type="term" value="C:cytosol"/>
    <property type="evidence" value="ECO:0007669"/>
    <property type="project" value="UniProtKB-SubCell"/>
</dbReference>
<dbReference type="GO" id="GO:0012505">
    <property type="term" value="C:endomembrane system"/>
    <property type="evidence" value="ECO:0000314"/>
    <property type="project" value="UniProtKB"/>
</dbReference>
<dbReference type="GO" id="GO:0005789">
    <property type="term" value="C:endoplasmic reticulum membrane"/>
    <property type="evidence" value="ECO:0007669"/>
    <property type="project" value="UniProtKB-SubCell"/>
</dbReference>
<dbReference type="GO" id="GO:0070062">
    <property type="term" value="C:extracellular exosome"/>
    <property type="evidence" value="ECO:0007005"/>
    <property type="project" value="UniProtKB"/>
</dbReference>
<dbReference type="GO" id="GO:0000139">
    <property type="term" value="C:Golgi membrane"/>
    <property type="evidence" value="ECO:0007669"/>
    <property type="project" value="UniProtKB-SubCell"/>
</dbReference>
<dbReference type="GO" id="GO:0005765">
    <property type="term" value="C:lysosomal membrane"/>
    <property type="evidence" value="ECO:0000314"/>
    <property type="project" value="UniProtKB"/>
</dbReference>
<dbReference type="GO" id="GO:0016020">
    <property type="term" value="C:membrane"/>
    <property type="evidence" value="ECO:0000304"/>
    <property type="project" value="ProtInc"/>
</dbReference>
<dbReference type="GO" id="GO:0005886">
    <property type="term" value="C:plasma membrane"/>
    <property type="evidence" value="ECO:0000318"/>
    <property type="project" value="GO_Central"/>
</dbReference>
<dbReference type="GO" id="GO:0014069">
    <property type="term" value="C:postsynaptic density"/>
    <property type="evidence" value="ECO:0000314"/>
    <property type="project" value="SynGO"/>
</dbReference>
<dbReference type="GO" id="GO:0005681">
    <property type="term" value="C:spliceosomal complex"/>
    <property type="evidence" value="ECO:0007669"/>
    <property type="project" value="Ensembl"/>
</dbReference>
<dbReference type="GO" id="GO:0019003">
    <property type="term" value="F:GDP binding"/>
    <property type="evidence" value="ECO:0000315"/>
    <property type="project" value="CAFA"/>
</dbReference>
<dbReference type="GO" id="GO:0005525">
    <property type="term" value="F:GTP binding"/>
    <property type="evidence" value="ECO:0000315"/>
    <property type="project" value="CAFA"/>
</dbReference>
<dbReference type="GO" id="GO:0003924">
    <property type="term" value="F:GTPase activity"/>
    <property type="evidence" value="ECO:0000314"/>
    <property type="project" value="UniProtKB"/>
</dbReference>
<dbReference type="GO" id="GO:0000287">
    <property type="term" value="F:magnesium ion binding"/>
    <property type="evidence" value="ECO:0000315"/>
    <property type="project" value="CAFA"/>
</dbReference>
<dbReference type="GO" id="GO:0030295">
    <property type="term" value="F:protein kinase activator activity"/>
    <property type="evidence" value="ECO:0000314"/>
    <property type="project" value="UniProtKB"/>
</dbReference>
<dbReference type="GO" id="GO:0019901">
    <property type="term" value="F:protein kinase binding"/>
    <property type="evidence" value="ECO:0007669"/>
    <property type="project" value="Ensembl"/>
</dbReference>
<dbReference type="GO" id="GO:0043539">
    <property type="term" value="F:protein serine/threonine kinase activator activity"/>
    <property type="evidence" value="ECO:0000314"/>
    <property type="project" value="UniProt"/>
</dbReference>
<dbReference type="GO" id="GO:0031669">
    <property type="term" value="P:cellular response to nutrient levels"/>
    <property type="evidence" value="ECO:0000314"/>
    <property type="project" value="UniProt"/>
</dbReference>
<dbReference type="GO" id="GO:0120163">
    <property type="term" value="P:negative regulation of cold-induced thermogenesis"/>
    <property type="evidence" value="ECO:0000250"/>
    <property type="project" value="YuBioLab"/>
</dbReference>
<dbReference type="GO" id="GO:0048709">
    <property type="term" value="P:oligodendrocyte differentiation"/>
    <property type="evidence" value="ECO:0007669"/>
    <property type="project" value="Ensembl"/>
</dbReference>
<dbReference type="GO" id="GO:0048714">
    <property type="term" value="P:positive regulation of oligodendrocyte differentiation"/>
    <property type="evidence" value="ECO:0007669"/>
    <property type="project" value="Ensembl"/>
</dbReference>
<dbReference type="GO" id="GO:0032008">
    <property type="term" value="P:positive regulation of TOR signaling"/>
    <property type="evidence" value="ECO:0000315"/>
    <property type="project" value="UniProtKB"/>
</dbReference>
<dbReference type="GO" id="GO:1904263">
    <property type="term" value="P:positive regulation of TORC1 signaling"/>
    <property type="evidence" value="ECO:0000314"/>
    <property type="project" value="UniProtKB"/>
</dbReference>
<dbReference type="GO" id="GO:0051726">
    <property type="term" value="P:regulation of cell cycle"/>
    <property type="evidence" value="ECO:0000304"/>
    <property type="project" value="Reactome"/>
</dbReference>
<dbReference type="GO" id="GO:0016241">
    <property type="term" value="P:regulation of macroautophagy"/>
    <property type="evidence" value="ECO:0000304"/>
    <property type="project" value="Reactome"/>
</dbReference>
<dbReference type="GO" id="GO:2000074">
    <property type="term" value="P:regulation of type B pancreatic cell development"/>
    <property type="evidence" value="ECO:0000315"/>
    <property type="project" value="CACAO"/>
</dbReference>
<dbReference type="GO" id="GO:0009615">
    <property type="term" value="P:response to virus"/>
    <property type="evidence" value="ECO:0007669"/>
    <property type="project" value="Ensembl"/>
</dbReference>
<dbReference type="GO" id="GO:0007165">
    <property type="term" value="P:signal transduction"/>
    <property type="evidence" value="ECO:0000304"/>
    <property type="project" value="ProtInc"/>
</dbReference>
<dbReference type="GO" id="GO:0007264">
    <property type="term" value="P:small GTPase-mediated signal transduction"/>
    <property type="evidence" value="ECO:0000318"/>
    <property type="project" value="GO_Central"/>
</dbReference>
<dbReference type="CDD" id="cd04137">
    <property type="entry name" value="RheB"/>
    <property type="match status" value="1"/>
</dbReference>
<dbReference type="DisProt" id="DP00364"/>
<dbReference type="FunFam" id="3.40.50.300:FF:000273">
    <property type="entry name" value="GTP-binding protein Rheb homolog"/>
    <property type="match status" value="1"/>
</dbReference>
<dbReference type="Gene3D" id="3.40.50.300">
    <property type="entry name" value="P-loop containing nucleotide triphosphate hydrolases"/>
    <property type="match status" value="1"/>
</dbReference>
<dbReference type="InterPro" id="IPR027417">
    <property type="entry name" value="P-loop_NTPase"/>
</dbReference>
<dbReference type="InterPro" id="IPR005225">
    <property type="entry name" value="Small_GTP-bd"/>
</dbReference>
<dbReference type="InterPro" id="IPR001806">
    <property type="entry name" value="Small_GTPase"/>
</dbReference>
<dbReference type="InterPro" id="IPR020849">
    <property type="entry name" value="Small_GTPase_Ras-type"/>
</dbReference>
<dbReference type="NCBIfam" id="TIGR00231">
    <property type="entry name" value="small_GTP"/>
    <property type="match status" value="1"/>
</dbReference>
<dbReference type="PANTHER" id="PTHR24070">
    <property type="entry name" value="RAS, DI-RAS, AND RHEB FAMILY MEMBERS OF SMALL GTPASE SUPERFAMILY"/>
    <property type="match status" value="1"/>
</dbReference>
<dbReference type="Pfam" id="PF00071">
    <property type="entry name" value="Ras"/>
    <property type="match status" value="1"/>
</dbReference>
<dbReference type="PRINTS" id="PR00449">
    <property type="entry name" value="RASTRNSFRMNG"/>
</dbReference>
<dbReference type="SMART" id="SM00175">
    <property type="entry name" value="RAB"/>
    <property type="match status" value="1"/>
</dbReference>
<dbReference type="SMART" id="SM00173">
    <property type="entry name" value="RAS"/>
    <property type="match status" value="1"/>
</dbReference>
<dbReference type="SMART" id="SM00174">
    <property type="entry name" value="RHO"/>
    <property type="match status" value="1"/>
</dbReference>
<dbReference type="SUPFAM" id="SSF52540">
    <property type="entry name" value="P-loop containing nucleoside triphosphate hydrolases"/>
    <property type="match status" value="1"/>
</dbReference>
<dbReference type="PROSITE" id="PS51421">
    <property type="entry name" value="RAS"/>
    <property type="match status" value="1"/>
</dbReference>
<name>RHEB_HUMAN</name>
<comment type="function">
    <text evidence="2 3 4 5 6 8 11 12 14 16 17 18 19 20 22 23">Small GTPase that acts as an allosteric activator of the canonical mTORC1 complex, an evolutionarily conserved central nutrient sensor that stimulates anabolic reactions and macromolecule biosynthesis to promote cellular biomass generation and growth (PubMed:12172553, PubMed:12271141, PubMed:12842888, PubMed:12869586, PubMed:12906785, PubMed:15340059, PubMed:15854902, PubMed:16098514, PubMed:20381137, PubMed:22819219, PubMed:24529379, PubMed:29416044, PubMed:32470140, PubMed:33157014, PubMed:25816988). In response to nutrients, growth factors or amino acids, specifically activates the protein kinase activity of MTOR, the catalytic component of the mTORC1 complex: acts by causing a conformational change that allows the alignment of residues in the active site of MTOR, thereby enhancing the phosphorylation of ribosomal protein S6 kinase (RPS6KB1 and RPS6KB2) and EIF4EBP1 (4E-BP1) (PubMed:29236692, PubMed:33157014). RHEB is also required for localization of the TSC-TBC complex to lysosomal membranes (PubMed:24529379). In response to starvation, RHEB is inactivated by the TSC-TBC complex, preventing activation of mTORC1 (PubMed:24529379, PubMed:33157014). Has low intrinsic GTPase activity (PubMed:15340059).</text>
</comment>
<comment type="catalytic activity">
    <reaction evidence="8 16">
        <text>GTP + H2O = GDP + phosphate + H(+)</text>
        <dbReference type="Rhea" id="RHEA:19669"/>
        <dbReference type="ChEBI" id="CHEBI:15377"/>
        <dbReference type="ChEBI" id="CHEBI:15378"/>
        <dbReference type="ChEBI" id="CHEBI:37565"/>
        <dbReference type="ChEBI" id="CHEBI:43474"/>
        <dbReference type="ChEBI" id="CHEBI:58189"/>
    </reaction>
    <physiologicalReaction direction="left-to-right" evidence="8 16">
        <dbReference type="Rhea" id="RHEA:19670"/>
    </physiologicalReaction>
</comment>
<comment type="activity regulation">
    <text evidence="3 4 5 6 8 16 17 20">Alternates between an inactive form bound to GDP and an active form bound to GTP (PubMed:12271141, PubMed:12842888, PubMed:12869586, PubMed:12906785, PubMed:15340059, PubMed:22819219, PubMed:24529379). Inactivated by the TSC-TBC complex via the GTPase activating protein (GAP) domain of TSC2 (PubMed:12271141, PubMed:12842888, PubMed:12869586, PubMed:12906785, PubMed:15340059, PubMed:22819219, PubMed:24529379). Autoinhibited by Tyr-35, which constrains the active site conformation, restricting the access of the catalytic Asp-65 to the nucleotide-binding pocket (PubMed:22819219). Specifically inhibited by NR1 (4-bromo-6-(3,4-dichlorophenylthio)-1-(4-(dimethylcarbamoyl)benzyl)-1H-indole-2-carboxylic acid) (PubMed:29416044).</text>
</comment>
<comment type="subunit">
    <text evidence="11 12 15 16 17 18">Associates with the mTORC1 complex (MTOR, MLST8 and RPTOR) in a guanyl nucleotide-independent manner (PubMed:15854902, PubMed:16098514, PubMed:24529379). Interacts with TSC2 (PubMed:15854902, PubMed:22819219, PubMed:24529379, PubMed:25816988). Interacts with MCRS1; the interaction maintains RHEB at the lysosome in its active GTP-bound form and prevents its interaction with the mTORC1 complex inhibitor TSC2, ensuring activation of the mTORC1 complex by RHEB (PubMed:25816988). Interacts (when prenylated) with PDE6D; this promotes release from membranes (PubMed:22002721).</text>
</comment>
<comment type="interaction">
    <interactant intactId="EBI-1055287">
        <id>Q15382</id>
    </interactant>
    <interactant intactId="EBI-743771">
        <id>Q92624</id>
        <label>APPBP2</label>
    </interactant>
    <organismsDiffer>false</organismsDiffer>
    <experiments>3</experiments>
</comment>
<comment type="interaction">
    <interactant intactId="EBI-1055287">
        <id>Q15382</id>
    </interactant>
    <interactant intactId="EBI-718729">
        <id>P55212</id>
        <label>CASP6</label>
    </interactant>
    <organismsDiffer>false</organismsDiffer>
    <experiments>3</experiments>
</comment>
<comment type="interaction">
    <interactant intactId="EBI-1055287">
        <id>Q15382</id>
    </interactant>
    <interactant intactId="EBI-6624398">
        <id>P06307</id>
        <label>CCK</label>
    </interactant>
    <organismsDiffer>false</organismsDiffer>
    <experiments>3</experiments>
</comment>
<comment type="interaction">
    <interactant intactId="EBI-1055287">
        <id>Q15382</id>
    </interactant>
    <interactant intactId="EBI-348399">
        <id>P22607</id>
        <label>FGFR3</label>
    </interactant>
    <organismsDiffer>false</organismsDiffer>
    <experiments>3</experiments>
</comment>
<comment type="interaction">
    <interactant intactId="EBI-1055287">
        <id>Q15382</id>
    </interactant>
    <interactant intactId="EBI-8285963">
        <id>Q14957</id>
        <label>GRIN2C</label>
    </interactant>
    <organismsDiffer>false</organismsDiffer>
    <experiments>3</experiments>
</comment>
<comment type="interaction">
    <interactant intactId="EBI-1055287">
        <id>Q15382</id>
    </interactant>
    <interactant intactId="EBI-473886">
        <id>O00291</id>
        <label>HIP1</label>
    </interactant>
    <organismsDiffer>false</organismsDiffer>
    <experiments>3</experiments>
</comment>
<comment type="interaction">
    <interactant intactId="EBI-1055287">
        <id>Q15382</id>
    </interactant>
    <interactant intactId="EBI-21591415">
        <id>P13473-2</id>
        <label>LAMP2</label>
    </interactant>
    <organismsDiffer>false</organismsDiffer>
    <experiments>4</experiments>
</comment>
<comment type="interaction">
    <interactant intactId="EBI-1055287">
        <id>Q15382</id>
    </interactant>
    <interactant intactId="EBI-359260">
        <id>P42345</id>
        <label>MTOR</label>
    </interactant>
    <organismsDiffer>false</organismsDiffer>
    <experiments>2</experiments>
</comment>
<comment type="interaction">
    <interactant intactId="EBI-1055287">
        <id>Q15382</id>
    </interactant>
    <interactant intactId="EBI-2827556">
        <id>Q13393</id>
        <label>PLD1</label>
    </interactant>
    <organismsDiffer>false</organismsDiffer>
    <experiments>2</experiments>
</comment>
<comment type="interaction">
    <interactant intactId="EBI-1055287">
        <id>Q15382</id>
    </interactant>
    <interactant intactId="EBI-5280197">
        <id>O75400-2</id>
        <label>PRPF40A</label>
    </interactant>
    <organismsDiffer>false</organismsDiffer>
    <experiments>3</experiments>
</comment>
<comment type="interaction">
    <interactant intactId="EBI-1055287">
        <id>Q15382</id>
    </interactant>
    <interactant intactId="EBI-286642">
        <id>P62826</id>
        <label>RAN</label>
    </interactant>
    <organismsDiffer>false</organismsDiffer>
    <experiments>3</experiments>
</comment>
<comment type="interaction">
    <interactant intactId="EBI-1055287">
        <id>Q15382</id>
    </interactant>
    <interactant intactId="EBI-1783169">
        <id>P13693</id>
        <label>TPT1</label>
    </interactant>
    <organismsDiffer>false</organismsDiffer>
    <experiments>2</experiments>
</comment>
<comment type="interaction">
    <interactant intactId="EBI-1055287">
        <id>Q15382</id>
    </interactant>
    <interactant intactId="EBI-741480">
        <id>Q9UMX0</id>
        <label>UBQLN1</label>
    </interactant>
    <organismsDiffer>false</organismsDiffer>
    <experiments>3</experiments>
</comment>
<comment type="interaction">
    <interactant intactId="EBI-1055287">
        <id>Q15382</id>
    </interactant>
    <interactant intactId="EBI-25900580">
        <id>Q9Y649</id>
    </interactant>
    <organismsDiffer>false</organismsDiffer>
    <experiments>3</experiments>
</comment>
<comment type="interaction">
    <interactant intactId="EBI-6860739">
        <id>PRO_0000082708</id>
    </interactant>
    <interactant intactId="EBI-712685">
        <id>O43924</id>
        <label>PDE6D</label>
    </interactant>
    <organismsDiffer>false</organismsDiffer>
    <experiments>5</experiments>
</comment>
<comment type="subcellular location">
    <subcellularLocation>
        <location evidence="15">Endomembrane system</location>
        <topology evidence="15">Lipid-anchor</topology>
        <orientation evidence="9">Cytoplasmic side</orientation>
    </subcellularLocation>
    <subcellularLocation>
        <location evidence="17 18 23">Lysosome membrane</location>
        <topology evidence="15">Lipid-anchor</topology>
        <orientation evidence="9">Cytoplasmic side</orientation>
    </subcellularLocation>
    <subcellularLocation>
        <location evidence="15">Golgi apparatus membrane</location>
        <topology evidence="27">Lipid-anchor</topology>
        <orientation evidence="27">Cytoplasmic side</orientation>
    </subcellularLocation>
    <subcellularLocation>
        <location evidence="15">Endoplasmic reticulum membrane</location>
        <topology evidence="15">Lipid-anchor</topology>
        <orientation evidence="15">Cytoplasmic side</orientation>
    </subcellularLocation>
    <subcellularLocation>
        <location evidence="15">Cytoplasm</location>
        <location evidence="15">Cytosol</location>
    </subcellularLocation>
    <text evidence="17">Farnesylation is required for recruitment to lysosomal membranes, where it activates the mTORC1 complex.</text>
</comment>
<comment type="tissue specificity">
    <text evidence="24">Ubiquitous (PubMed:8543055). Highest levels observed in skeletal and cardiac muscle (PubMed:8543055).</text>
</comment>
<comment type="PTM">
    <text evidence="4 6 15">Farnesylation is important for efficiently activating mTORC1-mediated signaling.</text>
</comment>
<comment type="PTM">
    <text evidence="21 23">Polyubiquitinated in response to amino acid, promoting its interaction with MTOR and mTORC1 activation (PubMed:33157014). Deubiquitination by ATXN3 promotes recruitment of the TSC-TBC complex and RHEB inactivation by TSC2 (PubMed:33157014). Monoubiquitinated at Lys-8 by RNF152, promoting its association with the TSC-TBC complex (PubMed:30514904). Deubiquitinated at Lys-8 by USP4, promoting mTORC1 activation (PubMed:30514904).</text>
</comment>
<comment type="PTM">
    <text evidence="1">Phosphorylation by MAPKAPK5 impairs GTP-binding and inactivation.</text>
</comment>
<comment type="miscellaneous">
    <text evidence="8">The conserved catalytic Gln-64 found in other Ras-like GTPases seems not to be involved in GTP hydrolysis in RHEB.</text>
</comment>
<comment type="similarity">
    <text evidence="26">Belongs to the small GTPase superfamily. Rheb family.</text>
</comment>
<protein>
    <recommendedName>
        <fullName evidence="26">GTP-binding protein Rheb</fullName>
        <ecNumber evidence="8 16">3.6.5.-</ecNumber>
    </recommendedName>
    <alternativeName>
        <fullName>Ras homolog enriched in brain</fullName>
    </alternativeName>
</protein>
<gene>
    <name evidence="25 28" type="primary">RHEB</name>
    <name type="synonym">RHEB2</name>
</gene>
<organism>
    <name type="scientific">Homo sapiens</name>
    <name type="common">Human</name>
    <dbReference type="NCBI Taxonomy" id="9606"/>
    <lineage>
        <taxon>Eukaryota</taxon>
        <taxon>Metazoa</taxon>
        <taxon>Chordata</taxon>
        <taxon>Craniata</taxon>
        <taxon>Vertebrata</taxon>
        <taxon>Euteleostomi</taxon>
        <taxon>Mammalia</taxon>
        <taxon>Eutheria</taxon>
        <taxon>Euarchontoglires</taxon>
        <taxon>Primates</taxon>
        <taxon>Haplorrhini</taxon>
        <taxon>Catarrhini</taxon>
        <taxon>Hominidae</taxon>
        <taxon>Homo</taxon>
    </lineage>
</organism>
<sequence>MPQSKSRKIAILGYRSVGKSSLTIQFVEGQFVDSYDPTIENTFTKLITVNGQEYHLQLVDTAGQDEYSIFPQTYSIDINGYILVYSVTSIKSFEVIKVIHGKLLDMVGKVQIPIMLVGNKKDLHMERVISYEEGKALAESWNAAFLESSAKENQTAVDVFRRIILEAEKMDGAASQGKSSCSVM</sequence>
<feature type="chain" id="PRO_0000082708" description="GTP-binding protein Rheb">
    <location>
        <begin position="1"/>
        <end position="181"/>
    </location>
</feature>
<feature type="propeptide" id="PRO_0000281365" description="Removed in mature form" evidence="7 15">
    <location>
        <begin position="182"/>
        <end position="184"/>
    </location>
</feature>
<feature type="short sequence motif" description="Effector region" evidence="26">
    <location>
        <begin position="35"/>
        <end position="43"/>
    </location>
</feature>
<feature type="binding site" evidence="10 15 16 20 22 29 31 32 33 35 36 37 38">
    <location>
        <position position="16"/>
    </location>
    <ligand>
        <name>GDP</name>
        <dbReference type="ChEBI" id="CHEBI:58189"/>
    </ligand>
</feature>
<feature type="binding site" evidence="10 19 30 34">
    <location>
        <position position="16"/>
    </location>
    <ligand>
        <name>GTP</name>
        <dbReference type="ChEBI" id="CHEBI:37565"/>
    </ligand>
</feature>
<feature type="binding site" evidence="10 15 16 22 29 31 32 37 38">
    <location>
        <position position="17"/>
    </location>
    <ligand>
        <name>GDP</name>
        <dbReference type="ChEBI" id="CHEBI:58189"/>
    </ligand>
</feature>
<feature type="binding site" evidence="10 15 16 20 22 29 31 32 33 35 36 37 38">
    <location>
        <position position="18"/>
    </location>
    <ligand>
        <name>GDP</name>
        <dbReference type="ChEBI" id="CHEBI:58189"/>
    </ligand>
</feature>
<feature type="binding site" evidence="10 19 30 34">
    <location>
        <position position="18"/>
    </location>
    <ligand>
        <name>GTP</name>
        <dbReference type="ChEBI" id="CHEBI:37565"/>
    </ligand>
</feature>
<feature type="binding site" evidence="10 15 16 20 22 29 31 32 33 35 36 37 38">
    <location>
        <position position="19"/>
    </location>
    <ligand>
        <name>GDP</name>
        <dbReference type="ChEBI" id="CHEBI:58189"/>
    </ligand>
</feature>
<feature type="binding site" evidence="10 15 19 30 34">
    <location>
        <position position="19"/>
    </location>
    <ligand>
        <name>GTP</name>
        <dbReference type="ChEBI" id="CHEBI:37565"/>
    </ligand>
</feature>
<feature type="binding site" evidence="10 15 16 20 22 29 31 32 33 35 36 37 38">
    <location>
        <position position="20"/>
    </location>
    <ligand>
        <name>GDP</name>
        <dbReference type="ChEBI" id="CHEBI:58189"/>
    </ligand>
</feature>
<feature type="binding site" evidence="10 19 30 34">
    <location>
        <position position="20"/>
    </location>
    <ligand>
        <name>GTP</name>
        <dbReference type="ChEBI" id="CHEBI:37565"/>
    </ligand>
</feature>
<feature type="binding site" evidence="10 19 20 33 34 35 36">
    <location>
        <position position="20"/>
    </location>
    <ligand>
        <name>Mg(2+)</name>
        <dbReference type="ChEBI" id="CHEBI:18420"/>
    </ligand>
</feature>
<feature type="binding site" evidence="10 15 16 20 22 29 31 32 33 35 36 37 38">
    <location>
        <position position="21"/>
    </location>
    <ligand>
        <name>GDP</name>
        <dbReference type="ChEBI" id="CHEBI:58189"/>
    </ligand>
</feature>
<feature type="binding site" evidence="10 30">
    <location>
        <position position="21"/>
    </location>
    <ligand>
        <name>GTP</name>
        <dbReference type="ChEBI" id="CHEBI:37565"/>
    </ligand>
</feature>
<feature type="binding site" evidence="10 15 16 20 31 33 35">
    <location>
        <position position="32"/>
    </location>
    <ligand>
        <name>GDP</name>
        <dbReference type="ChEBI" id="CHEBI:58189"/>
    </ligand>
</feature>
<feature type="binding site" evidence="10 30">
    <location>
        <position position="32"/>
    </location>
    <ligand>
        <name>GTP</name>
        <dbReference type="ChEBI" id="CHEBI:37565"/>
    </ligand>
</feature>
<feature type="binding site" evidence="10 15 16 20 22 31 36 37 38">
    <location>
        <position position="33"/>
    </location>
    <ligand>
        <name>GDP</name>
        <dbReference type="ChEBI" id="CHEBI:58189"/>
    </ligand>
</feature>
<feature type="binding site" evidence="10 19 30 34">
    <location>
        <position position="35"/>
    </location>
    <ligand>
        <name>GTP</name>
        <dbReference type="ChEBI" id="CHEBI:37565"/>
    </ligand>
</feature>
<feature type="binding site" evidence="10 19 30 34">
    <location>
        <position position="38"/>
    </location>
    <ligand>
        <name>GTP</name>
        <dbReference type="ChEBI" id="CHEBI:37565"/>
    </ligand>
</feature>
<feature type="binding site" evidence="10 19 34">
    <location>
        <position position="38"/>
    </location>
    <ligand>
        <name>Mg(2+)</name>
        <dbReference type="ChEBI" id="CHEBI:18420"/>
    </ligand>
</feature>
<feature type="binding site" evidence="10 15 16 20 22 29 31 32 33 35 36 37 38">
    <location>
        <position position="119"/>
    </location>
    <ligand>
        <name>GDP</name>
        <dbReference type="ChEBI" id="CHEBI:58189"/>
    </ligand>
</feature>
<feature type="binding site" evidence="10 19 30 34">
    <location>
        <position position="119"/>
    </location>
    <ligand>
        <name>GTP</name>
        <dbReference type="ChEBI" id="CHEBI:37565"/>
    </ligand>
</feature>
<feature type="binding site" evidence="10 15 16 20 22 29 31 32 33 35 36 37 38">
    <location>
        <position position="122"/>
    </location>
    <ligand>
        <name>GDP</name>
        <dbReference type="ChEBI" id="CHEBI:58189"/>
    </ligand>
</feature>
<feature type="binding site" evidence="10 19 30 34">
    <location>
        <position position="122"/>
    </location>
    <ligand>
        <name>GTP</name>
        <dbReference type="ChEBI" id="CHEBI:37565"/>
    </ligand>
</feature>
<feature type="binding site" evidence="10 15 16 20 22 29 31 32 33 35 36 37 38">
    <location>
        <position position="150"/>
    </location>
    <ligand>
        <name>GDP</name>
        <dbReference type="ChEBI" id="CHEBI:58189"/>
    </ligand>
</feature>
<feature type="binding site" evidence="10 19 30 34">
    <location>
        <position position="150"/>
    </location>
    <ligand>
        <name>GTP</name>
        <dbReference type="ChEBI" id="CHEBI:37565"/>
    </ligand>
</feature>
<feature type="site" description="Important for autoinhibition of GTPase activity" evidence="16">
    <location>
        <position position="35"/>
    </location>
</feature>
<feature type="modified residue" description="Phosphoserine; by MAPKAPK5" evidence="1">
    <location>
        <position position="130"/>
    </location>
</feature>
<feature type="modified residue" description="Cysteine methyl ester" evidence="6 7 15 32">
    <location>
        <position position="181"/>
    </location>
</feature>
<feature type="lipid moiety-binding region" description="S-farnesyl cysteine" evidence="6 7 15 32">
    <location>
        <position position="181"/>
    </location>
</feature>
<feature type="cross-link" description="Glycyl lysine isopeptide (Lys-Gly) (interchain with G-Cter in ubiquitin)" evidence="21">
    <location>
        <position position="8"/>
    </location>
</feature>
<feature type="sequence variant" id="VAR_036310" description="In a colorectal cancer sample; somatic mutation." evidence="13">
    <original>E</original>
    <variation>K</variation>
    <location>
        <position position="139"/>
    </location>
</feature>
<feature type="mutagenesis site" description="Decreased ubiquitination by RNF152. Does not affect polyubiquitination in response to amino acids." evidence="23">
    <original>K</original>
    <variation>R</variation>
    <location>
        <position position="8"/>
    </location>
</feature>
<feature type="mutagenesis site" description="Partially resistant to inactivation by TSC1-TSC2." evidence="8">
    <original>R</original>
    <variation>G</variation>
    <location>
        <position position="15"/>
    </location>
</feature>
<feature type="mutagenesis site" description="Deficient in guanine nucleotide binding. Unable to rescue RPS6KB1 from inactivation by amino-acid withdrawal. Reduces affinity for MCRS1." evidence="8 11 18">
    <original>S</original>
    <variation>N</variation>
    <location>
        <position position="20"/>
    </location>
</feature>
<feature type="mutagenesis site" description="Increased GTPase ativity; insensitive to TSC2 regulation, leading to impaired regulation of mTORC1 signaling." evidence="16">
    <original>Y</original>
    <variation>A</variation>
    <location>
        <position position="35"/>
    </location>
</feature>
<feature type="mutagenesis site" description="Dominant mutant, which can activate mTORC1 in both GDP- and GTP-bound forms." evidence="22">
    <original>Y</original>
    <variation>N</variation>
    <location>
        <position position="35"/>
    </location>
</feature>
<feature type="mutagenesis site" description="Slightly impairs signaling through mTORC1, but still binds guanine nucleotides normally." evidence="11 12">
    <original>T</original>
    <variation>M</variation>
    <location>
        <position position="38"/>
    </location>
</feature>
<feature type="mutagenesis site" description="Impairs RPS6KB1 activation, but still binds guanine nucleotides normally. Slightly reduces interaction with MCRS1." evidence="11 18">
    <original>I</original>
    <variation>K</variation>
    <location>
        <position position="39"/>
    </location>
</feature>
<feature type="mutagenesis site" description="No effect." evidence="12">
    <original>E</original>
    <variation>G</variation>
    <location>
        <position position="40"/>
    </location>
</feature>
<feature type="mutagenesis site" description="Impairs interaction with MTOR. Impairs signaling through mTORC1, but still binds guanine nucleotides normally." evidence="11 12">
    <original>N</original>
    <variation>A</variation>
    <location>
        <position position="41"/>
    </location>
</feature>
<feature type="mutagenesis site" description="No effect." evidence="12">
    <original>F</original>
    <variation>C</variation>
    <location>
        <position position="43"/>
    </location>
</feature>
<feature type="mutagenesis site" description="Causes slight reduction in RPS6KB1 activation." evidence="12">
    <original>L</original>
    <variation>A</variation>
    <location>
        <position position="46"/>
    </location>
</feature>
<feature type="mutagenesis site" description="Causes slightly reduced phosphorylation of EIF4EBP1." evidence="12">
    <original>T</original>
    <variation>A</variation>
    <location>
        <position position="48"/>
    </location>
</feature>
<feature type="mutagenesis site" description="Causes slightly reduced phosphorylation of EIF4EBP1." evidence="12">
    <original>V</original>
    <variation>A</variation>
    <location>
        <position position="49"/>
    </location>
</feature>
<feature type="mutagenesis site" description="Causes slightly reduced phosphorylation of EIF4EBP1." evidence="12">
    <original>E</original>
    <variation>A</variation>
    <location>
        <position position="53"/>
    </location>
</feature>
<feature type="mutagenesis site" description="Partially deficient in guanine nucleotide binding. Fully impairs EIF4EBP1 phosphorylation and RPS6KB1 activation." evidence="12">
    <original>Y</original>
    <variation>A</variation>
    <location>
        <position position="54"/>
    </location>
</feature>
<feature type="mutagenesis site" description="Partially deficient in guanine nucleotide binding. Fully impairs EIF4EBP1 phosphorylation and RPS6KB1 activation." evidence="12">
    <original>L</original>
    <variation>A</variation>
    <location>
        <position position="56"/>
    </location>
</feature>
<feature type="mutagenesis site" description="Unstable protein, which cannot load GTP." evidence="16">
    <original>D</original>
    <variation>A</variation>
    <location>
        <position position="60"/>
    </location>
</feature>
<feature type="mutagenesis site" description="Deficient in guanine nucleotide binding. Unable to rescue RPS6KB1 from inactivation by amino-acid withdrawal. Significantly reduces interaction with MCRS1." evidence="8 18">
    <original>D</original>
    <variation>I</variation>
    <location>
        <position position="60"/>
    </location>
</feature>
<feature type="mutagenesis site" description="Unable to bind Mg(2+), preventing nucleotide-binding." evidence="22">
    <original>D</original>
    <variation>K</variation>
    <location>
        <position position="60"/>
    </location>
</feature>
<feature type="mutagenesis site" description="Has a higher basal GTPase level, however, is still sensitive to TSC2 GAP activity. Increases affinity for MCRS1." evidence="4 8 18">
    <original>Q</original>
    <variation>L</variation>
    <location>
        <position position="64"/>
    </location>
</feature>
<feature type="mutagenesis site" description="Renders RHEB insensitive to TSC2 regulation, leading to impaired regulation of mTORC1 signaling." evidence="16">
    <original>D</original>
    <variation>A</variation>
    <variation>E</variation>
    <variation>N</variation>
    <location>
        <position position="65"/>
    </location>
</feature>
<feature type="mutagenesis site" description="Decreased ubiquitination in response to amino acids; when associated with R-135, R-151 and R-178." evidence="23">
    <original>K</original>
    <variation>R</variation>
    <location>
        <position position="109"/>
    </location>
</feature>
<feature type="mutagenesis site" description="Decreased ubiquitination in response to amino acids; when associated with R-109, R-151 and R-178." evidence="23">
    <original>K</original>
    <variation>R</variation>
    <location>
        <position position="135"/>
    </location>
</feature>
<feature type="mutagenesis site" description="Decreased ubiquitination in response to amino acids; when associated with R-109, R-135 and R-178." evidence="23">
    <original>K</original>
    <variation>R</variation>
    <location>
        <position position="151"/>
    </location>
</feature>
<feature type="mutagenesis site" description="Decreased ubiquitination in response to amino acids; when associated with R-109, R-135 and R-151." evidence="23">
    <original>K</original>
    <variation>R</variation>
    <location>
        <position position="178"/>
    </location>
</feature>
<feature type="mutagenesis site" description="Reduces the ability to rescue RPS6KB1 from inactivation by amino-acid withdrawal. Significantly reduces interaction with MCRS1." evidence="6 8 18">
    <original>C</original>
    <variation>S</variation>
    <location>
        <position position="181"/>
    </location>
</feature>
<feature type="sequence conflict" description="In Ref. 2; BAA11211." evidence="26" ref="2">
    <original>G</original>
    <variation>W</variation>
    <location>
        <position position="118"/>
    </location>
</feature>
<feature type="strand" evidence="40">
    <location>
        <begin position="5"/>
        <end position="14"/>
    </location>
</feature>
<feature type="helix" evidence="40">
    <location>
        <begin position="19"/>
        <end position="28"/>
    </location>
</feature>
<feature type="strand" evidence="40">
    <location>
        <begin position="39"/>
        <end position="49"/>
    </location>
</feature>
<feature type="strand" evidence="40">
    <location>
        <begin position="52"/>
        <end position="60"/>
    </location>
</feature>
<feature type="strand" evidence="41">
    <location>
        <begin position="66"/>
        <end position="68"/>
    </location>
</feature>
<feature type="helix" evidence="40">
    <location>
        <begin position="72"/>
        <end position="75"/>
    </location>
</feature>
<feature type="strand" evidence="40">
    <location>
        <begin position="80"/>
        <end position="86"/>
    </location>
</feature>
<feature type="helix" evidence="40">
    <location>
        <begin position="90"/>
        <end position="107"/>
    </location>
</feature>
<feature type="strand" evidence="40">
    <location>
        <begin position="114"/>
        <end position="119"/>
    </location>
</feature>
<feature type="helix" evidence="40">
    <location>
        <begin position="124"/>
        <end position="126"/>
    </location>
</feature>
<feature type="helix" evidence="40">
    <location>
        <begin position="131"/>
        <end position="140"/>
    </location>
</feature>
<feature type="strand" evidence="40">
    <location>
        <begin position="145"/>
        <end position="147"/>
    </location>
</feature>
<feature type="helix" evidence="40">
    <location>
        <begin position="153"/>
        <end position="169"/>
    </location>
</feature>